<feature type="signal peptide" evidence="2">
    <location>
        <begin position="1"/>
        <end position="25"/>
    </location>
</feature>
<feature type="chain" id="PRO_0000351643" description="IAA-amino acid hydrolase ILR1-like 7">
    <location>
        <begin position="26"/>
        <end position="455"/>
    </location>
</feature>
<dbReference type="EC" id="3.5.1.-"/>
<dbReference type="EMBL" id="AP005183">
    <property type="protein sequence ID" value="BAC20814.1"/>
    <property type="molecule type" value="Genomic_DNA"/>
</dbReference>
<dbReference type="EMBL" id="AP008213">
    <property type="protein sequence ID" value="BAF21207.2"/>
    <property type="status" value="ALT_SEQ"/>
    <property type="molecule type" value="Genomic_DNA"/>
</dbReference>
<dbReference type="EMBL" id="AP014963">
    <property type="status" value="NOT_ANNOTATED_CDS"/>
    <property type="molecule type" value="Genomic_DNA"/>
</dbReference>
<dbReference type="EMBL" id="AK243613">
    <property type="status" value="NOT_ANNOTATED_CDS"/>
    <property type="molecule type" value="mRNA"/>
</dbReference>
<dbReference type="SMR" id="Q8H3C9"/>
<dbReference type="FunCoup" id="Q8H3C9">
    <property type="interactions" value="417"/>
</dbReference>
<dbReference type="STRING" id="39947.Q8H3C9"/>
<dbReference type="MEROPS" id="M20.A02"/>
<dbReference type="PaxDb" id="39947-Q8H3C9"/>
<dbReference type="KEGG" id="dosa:Os07g0249700"/>
<dbReference type="eggNOG" id="ENOG502QQEM">
    <property type="taxonomic scope" value="Eukaryota"/>
</dbReference>
<dbReference type="HOGENOM" id="CLU_023257_0_0_1"/>
<dbReference type="InParanoid" id="Q8H3C9"/>
<dbReference type="PlantReactome" id="R-OSA-1119580">
    <property type="pathway name" value="IAA biosynthesis II"/>
</dbReference>
<dbReference type="Proteomes" id="UP000000763">
    <property type="component" value="Chromosome 7"/>
</dbReference>
<dbReference type="Proteomes" id="UP000059680">
    <property type="component" value="Chromosome 7"/>
</dbReference>
<dbReference type="GO" id="GO:0010179">
    <property type="term" value="F:IAA-Ala conjugate hydrolase activity"/>
    <property type="evidence" value="ECO:0000318"/>
    <property type="project" value="GO_Central"/>
</dbReference>
<dbReference type="GO" id="GO:0009850">
    <property type="term" value="P:auxin metabolic process"/>
    <property type="evidence" value="ECO:0000318"/>
    <property type="project" value="GO_Central"/>
</dbReference>
<dbReference type="CDD" id="cd08017">
    <property type="entry name" value="M20_IAA_Hyd"/>
    <property type="match status" value="1"/>
</dbReference>
<dbReference type="FunFam" id="3.30.70.360:FF:000001">
    <property type="entry name" value="N-acetyldiaminopimelate deacetylase"/>
    <property type="match status" value="1"/>
</dbReference>
<dbReference type="Gene3D" id="3.30.70.360">
    <property type="match status" value="1"/>
</dbReference>
<dbReference type="Gene3D" id="3.40.630.10">
    <property type="entry name" value="Zn peptidases"/>
    <property type="match status" value="1"/>
</dbReference>
<dbReference type="InterPro" id="IPR017439">
    <property type="entry name" value="Amidohydrolase"/>
</dbReference>
<dbReference type="InterPro" id="IPR036264">
    <property type="entry name" value="Bact_exopeptidase_dim_dom"/>
</dbReference>
<dbReference type="InterPro" id="IPR044757">
    <property type="entry name" value="ILR1-like_Hyd"/>
</dbReference>
<dbReference type="InterPro" id="IPR002933">
    <property type="entry name" value="Peptidase_M20"/>
</dbReference>
<dbReference type="InterPro" id="IPR011650">
    <property type="entry name" value="Peptidase_M20_dimer"/>
</dbReference>
<dbReference type="NCBIfam" id="TIGR01891">
    <property type="entry name" value="amidohydrolases"/>
    <property type="match status" value="1"/>
</dbReference>
<dbReference type="PANTHER" id="PTHR11014:SF63">
    <property type="entry name" value="METALLOPEPTIDASE, PUTATIVE (AFU_ORTHOLOGUE AFUA_6G09600)-RELATED"/>
    <property type="match status" value="1"/>
</dbReference>
<dbReference type="PANTHER" id="PTHR11014">
    <property type="entry name" value="PEPTIDASE M20 FAMILY MEMBER"/>
    <property type="match status" value="1"/>
</dbReference>
<dbReference type="Pfam" id="PF07687">
    <property type="entry name" value="M20_dimer"/>
    <property type="match status" value="1"/>
</dbReference>
<dbReference type="Pfam" id="PF01546">
    <property type="entry name" value="Peptidase_M20"/>
    <property type="match status" value="1"/>
</dbReference>
<dbReference type="PIRSF" id="PIRSF005962">
    <property type="entry name" value="Pept_M20D_amidohydro"/>
    <property type="match status" value="1"/>
</dbReference>
<dbReference type="SUPFAM" id="SSF55031">
    <property type="entry name" value="Bacterial exopeptidase dimerisation domain"/>
    <property type="match status" value="1"/>
</dbReference>
<dbReference type="SUPFAM" id="SSF53187">
    <property type="entry name" value="Zn-dependent exopeptidases"/>
    <property type="match status" value="1"/>
</dbReference>
<accession>Q8H3C9</accession>
<reference key="1">
    <citation type="journal article" date="2005" name="Nature">
        <title>The map-based sequence of the rice genome.</title>
        <authorList>
            <consortium name="International rice genome sequencing project (IRGSP)"/>
        </authorList>
    </citation>
    <scope>NUCLEOTIDE SEQUENCE [LARGE SCALE GENOMIC DNA]</scope>
    <source>
        <strain>cv. Nipponbare</strain>
    </source>
</reference>
<reference key="2">
    <citation type="journal article" date="2008" name="Nucleic Acids Res.">
        <title>The rice annotation project database (RAP-DB): 2008 update.</title>
        <authorList>
            <consortium name="The rice annotation project (RAP)"/>
        </authorList>
    </citation>
    <scope>GENOME REANNOTATION</scope>
    <source>
        <strain>cv. Nipponbare</strain>
    </source>
</reference>
<reference key="3">
    <citation type="journal article" date="2013" name="Rice">
        <title>Improvement of the Oryza sativa Nipponbare reference genome using next generation sequence and optical map data.</title>
        <authorList>
            <person name="Kawahara Y."/>
            <person name="de la Bastide M."/>
            <person name="Hamilton J.P."/>
            <person name="Kanamori H."/>
            <person name="McCombie W.R."/>
            <person name="Ouyang S."/>
            <person name="Schwartz D.C."/>
            <person name="Tanaka T."/>
            <person name="Wu J."/>
            <person name="Zhou S."/>
            <person name="Childs K.L."/>
            <person name="Davidson R.M."/>
            <person name="Lin H."/>
            <person name="Quesada-Ocampo L."/>
            <person name="Vaillancourt B."/>
            <person name="Sakai H."/>
            <person name="Lee S.S."/>
            <person name="Kim J."/>
            <person name="Numa H."/>
            <person name="Itoh T."/>
            <person name="Buell C.R."/>
            <person name="Matsumoto T."/>
        </authorList>
    </citation>
    <scope>GENOME REANNOTATION</scope>
    <source>
        <strain>cv. Nipponbare</strain>
    </source>
</reference>
<reference key="4">
    <citation type="submission" date="2006-10" db="EMBL/GenBank/DDBJ databases">
        <title>Oryza sativa full length cDNA.</title>
        <authorList>
            <consortium name="The rice full-length cDNA consortium"/>
        </authorList>
    </citation>
    <scope>NUCLEOTIDE SEQUENCE [LARGE SCALE MRNA] OF 2-455</scope>
    <source>
        <strain>cv. Nipponbare</strain>
    </source>
</reference>
<evidence type="ECO:0000250" key="1"/>
<evidence type="ECO:0000255" key="2"/>
<evidence type="ECO:0000305" key="3"/>
<proteinExistence type="evidence at transcript level"/>
<comment type="function">
    <text evidence="1">Hydrolyzes certain amino acid conjugates of the plant growth regulator indole-3-acetic acid (IAA).</text>
</comment>
<comment type="similarity">
    <text evidence="3">Belongs to the peptidase M20 family.</text>
</comment>
<comment type="sequence caution" evidence="3">
    <conflict type="erroneous gene model prediction">
        <sequence resource="EMBL-CDS" id="BAF21207"/>
    </conflict>
</comment>
<protein>
    <recommendedName>
        <fullName>IAA-amino acid hydrolase ILR1-like 7</fullName>
        <ecNumber>3.5.1.-</ecNumber>
    </recommendedName>
</protein>
<name>ILL7_ORYSJ</name>
<organism>
    <name type="scientific">Oryza sativa subsp. japonica</name>
    <name type="common">Rice</name>
    <dbReference type="NCBI Taxonomy" id="39947"/>
    <lineage>
        <taxon>Eukaryota</taxon>
        <taxon>Viridiplantae</taxon>
        <taxon>Streptophyta</taxon>
        <taxon>Embryophyta</taxon>
        <taxon>Tracheophyta</taxon>
        <taxon>Spermatophyta</taxon>
        <taxon>Magnoliopsida</taxon>
        <taxon>Liliopsida</taxon>
        <taxon>Poales</taxon>
        <taxon>Poaceae</taxon>
        <taxon>BOP clade</taxon>
        <taxon>Oryzoideae</taxon>
        <taxon>Oryzeae</taxon>
        <taxon>Oryzinae</taxon>
        <taxon>Oryza</taxon>
        <taxon>Oryza sativa</taxon>
    </lineage>
</organism>
<keyword id="KW-0378">Hydrolase</keyword>
<keyword id="KW-1185">Reference proteome</keyword>
<keyword id="KW-0732">Signal</keyword>
<gene>
    <name type="primary">ILL7</name>
    <name type="ordered locus">Os07g0249700</name>
    <name type="ordered locus">LOC_Os07g14590</name>
    <name type="ORF">P0021G06.114</name>
</gene>
<sequence length="455" mass="47997">MAASSSSSPLPLALPLLLLLLVLFASHPSPHAAAAAADAAPAGGGGGGSGGELLSAARAPGFAAWLRGLRRSIHRHPELAFEEVRTSELVRAELDAIGVPYEWPVARTGVVATIAGGDGAGAGTVFALRADMDALPLQELVDWEHKSEESGKMHACGHDAHTTMLLGAAKLLQSQKDDLKGTVKLVFQPAEEGYAGARYVLQEGVLDDVSAIFGLHVDPRIQVGTVTSRPGPFLAASGRFLATITGKGGHAAGPHNAVDPILTASSAIVSLQQIVARETDPLEAAVISVTFMKGGDAYNVIPESVSFGGTFRSLTSEGLSYLKKRIKEIVEAHATVHRCTATVDFMEEERIPYPATVNDEGMYRHARAVAVDVLGEDGVKVGTPFMGSEDFAFYAQRFPAAFFMIGVGNETTMRKVYPLHSPHFVVDEDVLPVGAALHAAVAMEYLNKHAFTATF</sequence>